<keyword id="KW-0687">Ribonucleoprotein</keyword>
<keyword id="KW-0689">Ribosomal protein</keyword>
<keyword id="KW-0694">RNA-binding</keyword>
<keyword id="KW-0699">rRNA-binding</keyword>
<keyword id="KW-0820">tRNA-binding</keyword>
<sequence length="179" mass="20013">MARFQEFYKEKVVPGLIEKFGYKSVMEVPRITKITLNMGLGEAIADKKIIENAVGDLTKIAGQKPVVTKARKAIAGFKIRQGYPIGAMVTLRGQAMYEFLDRFVTVALPRVRDFRGVSGRAFDGRGNYNIGVKEQIIFPEIDYDKIDALRGLNISITTTAKTDDEAKALLASFKFPFRN</sequence>
<evidence type="ECO:0000255" key="1">
    <source>
        <dbReference type="HAMAP-Rule" id="MF_01333"/>
    </source>
</evidence>
<evidence type="ECO:0000305" key="2"/>
<organism>
    <name type="scientific">Burkholderia lata (strain ATCC 17760 / DSM 23089 / LMG 22485 / NCIMB 9086 / R18194 / 383)</name>
    <dbReference type="NCBI Taxonomy" id="482957"/>
    <lineage>
        <taxon>Bacteria</taxon>
        <taxon>Pseudomonadati</taxon>
        <taxon>Pseudomonadota</taxon>
        <taxon>Betaproteobacteria</taxon>
        <taxon>Burkholderiales</taxon>
        <taxon>Burkholderiaceae</taxon>
        <taxon>Burkholderia</taxon>
        <taxon>Burkholderia cepacia complex</taxon>
    </lineage>
</organism>
<name>RL5_BURL3</name>
<accession>Q39KF5</accession>
<gene>
    <name evidence="1" type="primary">rplE</name>
    <name type="ordered locus">Bcep18194_A3459</name>
</gene>
<comment type="function">
    <text evidence="1">This is one of the proteins that bind and probably mediate the attachment of the 5S RNA into the large ribosomal subunit, where it forms part of the central protuberance. In the 70S ribosome it contacts protein S13 of the 30S subunit (bridge B1b), connecting the 2 subunits; this bridge is implicated in subunit movement. Contacts the P site tRNA; the 5S rRNA and some of its associated proteins might help stabilize positioning of ribosome-bound tRNAs.</text>
</comment>
<comment type="subunit">
    <text evidence="1">Part of the 50S ribosomal subunit; part of the 5S rRNA/L5/L18/L25 subcomplex. Contacts the 5S rRNA and the P site tRNA. Forms a bridge to the 30S subunit in the 70S ribosome.</text>
</comment>
<comment type="similarity">
    <text evidence="1">Belongs to the universal ribosomal protein uL5 family.</text>
</comment>
<feature type="chain" id="PRO_0000242981" description="Large ribosomal subunit protein uL5">
    <location>
        <begin position="1"/>
        <end position="179"/>
    </location>
</feature>
<proteinExistence type="inferred from homology"/>
<protein>
    <recommendedName>
        <fullName evidence="1">Large ribosomal subunit protein uL5</fullName>
    </recommendedName>
    <alternativeName>
        <fullName evidence="2">50S ribosomal protein L5</fullName>
    </alternativeName>
</protein>
<dbReference type="EMBL" id="CP000151">
    <property type="protein sequence ID" value="ABB07061.1"/>
    <property type="molecule type" value="Genomic_DNA"/>
</dbReference>
<dbReference type="RefSeq" id="WP_006477186.1">
    <property type="nucleotide sequence ID" value="NZ_WNDV01000034.1"/>
</dbReference>
<dbReference type="SMR" id="Q39KF5"/>
<dbReference type="GeneID" id="93193439"/>
<dbReference type="KEGG" id="bur:Bcep18194_A3459"/>
<dbReference type="HOGENOM" id="CLU_061015_2_1_4"/>
<dbReference type="Proteomes" id="UP000002705">
    <property type="component" value="Chromosome 1"/>
</dbReference>
<dbReference type="GO" id="GO:1990904">
    <property type="term" value="C:ribonucleoprotein complex"/>
    <property type="evidence" value="ECO:0007669"/>
    <property type="project" value="UniProtKB-KW"/>
</dbReference>
<dbReference type="GO" id="GO:0005840">
    <property type="term" value="C:ribosome"/>
    <property type="evidence" value="ECO:0007669"/>
    <property type="project" value="UniProtKB-KW"/>
</dbReference>
<dbReference type="GO" id="GO:0019843">
    <property type="term" value="F:rRNA binding"/>
    <property type="evidence" value="ECO:0007669"/>
    <property type="project" value="UniProtKB-UniRule"/>
</dbReference>
<dbReference type="GO" id="GO:0003735">
    <property type="term" value="F:structural constituent of ribosome"/>
    <property type="evidence" value="ECO:0007669"/>
    <property type="project" value="InterPro"/>
</dbReference>
<dbReference type="GO" id="GO:0000049">
    <property type="term" value="F:tRNA binding"/>
    <property type="evidence" value="ECO:0007669"/>
    <property type="project" value="UniProtKB-UniRule"/>
</dbReference>
<dbReference type="GO" id="GO:0006412">
    <property type="term" value="P:translation"/>
    <property type="evidence" value="ECO:0007669"/>
    <property type="project" value="UniProtKB-UniRule"/>
</dbReference>
<dbReference type="FunFam" id="3.30.1440.10:FF:000001">
    <property type="entry name" value="50S ribosomal protein L5"/>
    <property type="match status" value="1"/>
</dbReference>
<dbReference type="Gene3D" id="3.30.1440.10">
    <property type="match status" value="1"/>
</dbReference>
<dbReference type="HAMAP" id="MF_01333_B">
    <property type="entry name" value="Ribosomal_uL5_B"/>
    <property type="match status" value="1"/>
</dbReference>
<dbReference type="InterPro" id="IPR002132">
    <property type="entry name" value="Ribosomal_uL5"/>
</dbReference>
<dbReference type="InterPro" id="IPR020930">
    <property type="entry name" value="Ribosomal_uL5_bac-type"/>
</dbReference>
<dbReference type="InterPro" id="IPR031309">
    <property type="entry name" value="Ribosomal_uL5_C"/>
</dbReference>
<dbReference type="InterPro" id="IPR020929">
    <property type="entry name" value="Ribosomal_uL5_CS"/>
</dbReference>
<dbReference type="InterPro" id="IPR022803">
    <property type="entry name" value="Ribosomal_uL5_dom_sf"/>
</dbReference>
<dbReference type="InterPro" id="IPR031310">
    <property type="entry name" value="Ribosomal_uL5_N"/>
</dbReference>
<dbReference type="NCBIfam" id="NF000585">
    <property type="entry name" value="PRK00010.1"/>
    <property type="match status" value="1"/>
</dbReference>
<dbReference type="PANTHER" id="PTHR11994">
    <property type="entry name" value="60S RIBOSOMAL PROTEIN L11-RELATED"/>
    <property type="match status" value="1"/>
</dbReference>
<dbReference type="Pfam" id="PF00281">
    <property type="entry name" value="Ribosomal_L5"/>
    <property type="match status" value="1"/>
</dbReference>
<dbReference type="Pfam" id="PF00673">
    <property type="entry name" value="Ribosomal_L5_C"/>
    <property type="match status" value="1"/>
</dbReference>
<dbReference type="PIRSF" id="PIRSF002161">
    <property type="entry name" value="Ribosomal_L5"/>
    <property type="match status" value="1"/>
</dbReference>
<dbReference type="SUPFAM" id="SSF55282">
    <property type="entry name" value="RL5-like"/>
    <property type="match status" value="1"/>
</dbReference>
<dbReference type="PROSITE" id="PS00358">
    <property type="entry name" value="RIBOSOMAL_L5"/>
    <property type="match status" value="1"/>
</dbReference>
<reference key="1">
    <citation type="submission" date="2005-10" db="EMBL/GenBank/DDBJ databases">
        <title>Complete sequence of chromosome 1 of Burkholderia sp. 383.</title>
        <authorList>
            <consortium name="US DOE Joint Genome Institute"/>
            <person name="Copeland A."/>
            <person name="Lucas S."/>
            <person name="Lapidus A."/>
            <person name="Barry K."/>
            <person name="Detter J.C."/>
            <person name="Glavina T."/>
            <person name="Hammon N."/>
            <person name="Israni S."/>
            <person name="Pitluck S."/>
            <person name="Chain P."/>
            <person name="Malfatti S."/>
            <person name="Shin M."/>
            <person name="Vergez L."/>
            <person name="Schmutz J."/>
            <person name="Larimer F."/>
            <person name="Land M."/>
            <person name="Kyrpides N."/>
            <person name="Lykidis A."/>
            <person name="Richardson P."/>
        </authorList>
    </citation>
    <scope>NUCLEOTIDE SEQUENCE [LARGE SCALE GENOMIC DNA]</scope>
    <source>
        <strain>ATCC 17760 / DSM 23089 / LMG 22485 / NCIMB 9086 / R18194 / 383</strain>
    </source>
</reference>